<protein>
    <recommendedName>
        <fullName evidence="1">ATP synthase subunit b</fullName>
    </recommendedName>
    <alternativeName>
        <fullName evidence="1">ATP synthase F(0) sector subunit b</fullName>
    </alternativeName>
    <alternativeName>
        <fullName evidence="1">ATPase subunit I</fullName>
    </alternativeName>
    <alternativeName>
        <fullName evidence="1">F-type ATPase subunit b</fullName>
        <shortName evidence="1">F-ATPase subunit b</shortName>
    </alternativeName>
</protein>
<proteinExistence type="inferred from homology"/>
<comment type="function">
    <text evidence="1">F(1)F(0) ATP synthase produces ATP from ADP in the presence of a proton or sodium gradient. F-type ATPases consist of two structural domains, F(1) containing the extramembraneous catalytic core and F(0) containing the membrane proton channel, linked together by a central stalk and a peripheral stalk. During catalysis, ATP synthesis in the catalytic domain of F(1) is coupled via a rotary mechanism of the central stalk subunits to proton translocation.</text>
</comment>
<comment type="function">
    <text evidence="1">Component of the F(0) channel, it forms part of the peripheral stalk, linking F(1) to F(0).</text>
</comment>
<comment type="subunit">
    <text evidence="1">F-type ATPases have 2 components, F(1) - the catalytic core - and F(0) - the membrane proton channel. F(1) has five subunits: alpha(3), beta(3), gamma(1), delta(1), epsilon(1). F(0) has three main subunits: a(1), b(2) and c(10-14). The alpha and beta chains form an alternating ring which encloses part of the gamma chain. F(1) is attached to F(0) by a central stalk formed by the gamma and epsilon chains, while a peripheral stalk is formed by the delta and b chains.</text>
</comment>
<comment type="subcellular location">
    <subcellularLocation>
        <location evidence="1">Cell inner membrane</location>
        <topology evidence="1">Single-pass membrane protein</topology>
    </subcellularLocation>
</comment>
<comment type="similarity">
    <text evidence="1">Belongs to the ATPase B chain family.</text>
</comment>
<sequence length="156" mass="17397">MNINATLLGQAIAFAVFVWFCMKYVWPPLLAAIEDRQKKISDGLTQAERAGKDLELAQAKASEKLKEAKVQAAEIIEQANKRRNQIVEAAKTEAETERQKIIAQGEAEVEVDRNRVREELRLKVSALAIAGAEKIIKRSIDKEANSDIIDKLVAEL</sequence>
<keyword id="KW-0066">ATP synthesis</keyword>
<keyword id="KW-0997">Cell inner membrane</keyword>
<keyword id="KW-1003">Cell membrane</keyword>
<keyword id="KW-0138">CF(0)</keyword>
<keyword id="KW-0375">Hydrogen ion transport</keyword>
<keyword id="KW-0406">Ion transport</keyword>
<keyword id="KW-0472">Membrane</keyword>
<keyword id="KW-1185">Reference proteome</keyword>
<keyword id="KW-0812">Transmembrane</keyword>
<keyword id="KW-1133">Transmembrane helix</keyword>
<keyword id="KW-0813">Transport</keyword>
<gene>
    <name evidence="1" type="primary">atpF</name>
    <name type="ordered locus">Ping_3734</name>
</gene>
<organism>
    <name type="scientific">Psychromonas ingrahamii (strain DSM 17664 / CCUG 51855 / 37)</name>
    <dbReference type="NCBI Taxonomy" id="357804"/>
    <lineage>
        <taxon>Bacteria</taxon>
        <taxon>Pseudomonadati</taxon>
        <taxon>Pseudomonadota</taxon>
        <taxon>Gammaproteobacteria</taxon>
        <taxon>Alteromonadales</taxon>
        <taxon>Psychromonadaceae</taxon>
        <taxon>Psychromonas</taxon>
    </lineage>
</organism>
<dbReference type="EMBL" id="CP000510">
    <property type="protein sequence ID" value="ABM05408.1"/>
    <property type="molecule type" value="Genomic_DNA"/>
</dbReference>
<dbReference type="RefSeq" id="WP_011771956.1">
    <property type="nucleotide sequence ID" value="NC_008709.1"/>
</dbReference>
<dbReference type="SMR" id="A1T0Z3"/>
<dbReference type="STRING" id="357804.Ping_3734"/>
<dbReference type="KEGG" id="pin:Ping_3734"/>
<dbReference type="eggNOG" id="COG0711">
    <property type="taxonomic scope" value="Bacteria"/>
</dbReference>
<dbReference type="HOGENOM" id="CLU_079215_4_5_6"/>
<dbReference type="OrthoDB" id="9788020at2"/>
<dbReference type="Proteomes" id="UP000000639">
    <property type="component" value="Chromosome"/>
</dbReference>
<dbReference type="GO" id="GO:0005886">
    <property type="term" value="C:plasma membrane"/>
    <property type="evidence" value="ECO:0007669"/>
    <property type="project" value="UniProtKB-SubCell"/>
</dbReference>
<dbReference type="GO" id="GO:0045259">
    <property type="term" value="C:proton-transporting ATP synthase complex"/>
    <property type="evidence" value="ECO:0007669"/>
    <property type="project" value="UniProtKB-KW"/>
</dbReference>
<dbReference type="GO" id="GO:0046933">
    <property type="term" value="F:proton-transporting ATP synthase activity, rotational mechanism"/>
    <property type="evidence" value="ECO:0007669"/>
    <property type="project" value="UniProtKB-UniRule"/>
</dbReference>
<dbReference type="GO" id="GO:0046961">
    <property type="term" value="F:proton-transporting ATPase activity, rotational mechanism"/>
    <property type="evidence" value="ECO:0007669"/>
    <property type="project" value="TreeGrafter"/>
</dbReference>
<dbReference type="CDD" id="cd06503">
    <property type="entry name" value="ATP-synt_Fo_b"/>
    <property type="match status" value="1"/>
</dbReference>
<dbReference type="Gene3D" id="6.10.250.1580">
    <property type="match status" value="1"/>
</dbReference>
<dbReference type="HAMAP" id="MF_01398">
    <property type="entry name" value="ATP_synth_b_bprime"/>
    <property type="match status" value="1"/>
</dbReference>
<dbReference type="InterPro" id="IPR028987">
    <property type="entry name" value="ATP_synth_B-like_membr_sf"/>
</dbReference>
<dbReference type="InterPro" id="IPR002146">
    <property type="entry name" value="ATP_synth_b/b'su_bac/chlpt"/>
</dbReference>
<dbReference type="InterPro" id="IPR005864">
    <property type="entry name" value="ATP_synth_F0_bsu_bac"/>
</dbReference>
<dbReference type="InterPro" id="IPR050059">
    <property type="entry name" value="ATP_synthase_B_chain"/>
</dbReference>
<dbReference type="NCBIfam" id="TIGR01144">
    <property type="entry name" value="ATP_synt_b"/>
    <property type="match status" value="1"/>
</dbReference>
<dbReference type="NCBIfam" id="NF004411">
    <property type="entry name" value="PRK05759.1-2"/>
    <property type="match status" value="1"/>
</dbReference>
<dbReference type="NCBIfam" id="NF004413">
    <property type="entry name" value="PRK05759.1-4"/>
    <property type="match status" value="1"/>
</dbReference>
<dbReference type="PANTHER" id="PTHR33445:SF1">
    <property type="entry name" value="ATP SYNTHASE SUBUNIT B"/>
    <property type="match status" value="1"/>
</dbReference>
<dbReference type="PANTHER" id="PTHR33445">
    <property type="entry name" value="ATP SYNTHASE SUBUNIT B', CHLOROPLASTIC"/>
    <property type="match status" value="1"/>
</dbReference>
<dbReference type="Pfam" id="PF00430">
    <property type="entry name" value="ATP-synt_B"/>
    <property type="match status" value="1"/>
</dbReference>
<dbReference type="SUPFAM" id="SSF81573">
    <property type="entry name" value="F1F0 ATP synthase subunit B, membrane domain"/>
    <property type="match status" value="1"/>
</dbReference>
<accession>A1T0Z3</accession>
<feature type="chain" id="PRO_0000368700" description="ATP synthase subunit b">
    <location>
        <begin position="1"/>
        <end position="156"/>
    </location>
</feature>
<feature type="transmembrane region" description="Helical" evidence="1">
    <location>
        <begin position="11"/>
        <end position="31"/>
    </location>
</feature>
<evidence type="ECO:0000255" key="1">
    <source>
        <dbReference type="HAMAP-Rule" id="MF_01398"/>
    </source>
</evidence>
<name>ATPF_PSYIN</name>
<reference key="1">
    <citation type="journal article" date="2008" name="BMC Genomics">
        <title>Genomics of an extreme psychrophile, Psychromonas ingrahamii.</title>
        <authorList>
            <person name="Riley M."/>
            <person name="Staley J.T."/>
            <person name="Danchin A."/>
            <person name="Wang T.Z."/>
            <person name="Brettin T.S."/>
            <person name="Hauser L.J."/>
            <person name="Land M.L."/>
            <person name="Thompson L.S."/>
        </authorList>
    </citation>
    <scope>NUCLEOTIDE SEQUENCE [LARGE SCALE GENOMIC DNA]</scope>
    <source>
        <strain>DSM 17664 / CCUG 51855 / 37</strain>
    </source>
</reference>